<name>PRP4K_HUMAN</name>
<keyword id="KW-0002">3D-structure</keyword>
<keyword id="KW-0007">Acetylation</keyword>
<keyword id="KW-0067">ATP-binding</keyword>
<keyword id="KW-0137">Centromere</keyword>
<keyword id="KW-0158">Chromosome</keyword>
<keyword id="KW-1017">Isopeptide bond</keyword>
<keyword id="KW-0418">Kinase</keyword>
<keyword id="KW-0995">Kinetochore</keyword>
<keyword id="KW-0507">mRNA processing</keyword>
<keyword id="KW-0508">mRNA splicing</keyword>
<keyword id="KW-0547">Nucleotide-binding</keyword>
<keyword id="KW-0539">Nucleus</keyword>
<keyword id="KW-0597">Phosphoprotein</keyword>
<keyword id="KW-1267">Proteomics identification</keyword>
<keyword id="KW-1185">Reference proteome</keyword>
<keyword id="KW-0723">Serine/threonine-protein kinase</keyword>
<keyword id="KW-0747">Spliceosome</keyword>
<keyword id="KW-0808">Transferase</keyword>
<keyword id="KW-0832">Ubl conjugation</keyword>
<evidence type="ECO:0000250" key="1">
    <source>
        <dbReference type="UniProtKB" id="Q5RKH1"/>
    </source>
</evidence>
<evidence type="ECO:0000250" key="2">
    <source>
        <dbReference type="UniProtKB" id="Q61136"/>
    </source>
</evidence>
<evidence type="ECO:0000255" key="3">
    <source>
        <dbReference type="PROSITE-ProRule" id="PRU00159"/>
    </source>
</evidence>
<evidence type="ECO:0000255" key="4">
    <source>
        <dbReference type="PROSITE-ProRule" id="PRU10027"/>
    </source>
</evidence>
<evidence type="ECO:0000256" key="5">
    <source>
        <dbReference type="SAM" id="MobiDB-lite"/>
    </source>
</evidence>
<evidence type="ECO:0000269" key="6">
    <source>
    </source>
</evidence>
<evidence type="ECO:0000269" key="7">
    <source>
    </source>
</evidence>
<evidence type="ECO:0000269" key="8">
    <source>
    </source>
</evidence>
<evidence type="ECO:0000269" key="9">
    <source>
    </source>
</evidence>
<evidence type="ECO:0000269" key="10">
    <source>
    </source>
</evidence>
<evidence type="ECO:0000269" key="11">
    <source>
    </source>
</evidence>
<evidence type="ECO:0000269" key="12">
    <source>
    </source>
</evidence>
<evidence type="ECO:0000269" key="13">
    <source>
    </source>
</evidence>
<evidence type="ECO:0000269" key="14">
    <source>
    </source>
</evidence>
<evidence type="ECO:0000269" key="15">
    <source>
    </source>
</evidence>
<evidence type="ECO:0000269" key="16">
    <source>
    </source>
</evidence>
<evidence type="ECO:0000269" key="17">
    <source>
    </source>
</evidence>
<evidence type="ECO:0000305" key="18"/>
<evidence type="ECO:0000305" key="19">
    <source>
    </source>
</evidence>
<evidence type="ECO:0000305" key="20">
    <source>
    </source>
</evidence>
<evidence type="ECO:0000312" key="21">
    <source>
        <dbReference type="HGNC" id="HGNC:17346"/>
    </source>
</evidence>
<evidence type="ECO:0007744" key="22">
    <source>
    </source>
</evidence>
<evidence type="ECO:0007744" key="23">
    <source>
    </source>
</evidence>
<evidence type="ECO:0007744" key="24">
    <source>
    </source>
</evidence>
<evidence type="ECO:0007744" key="25">
    <source>
    </source>
</evidence>
<evidence type="ECO:0007744" key="26">
    <source>
    </source>
</evidence>
<evidence type="ECO:0007744" key="27">
    <source>
    </source>
</evidence>
<evidence type="ECO:0007744" key="28">
    <source>
    </source>
</evidence>
<evidence type="ECO:0007744" key="29">
    <source>
    </source>
</evidence>
<evidence type="ECO:0007744" key="30">
    <source>
    </source>
</evidence>
<evidence type="ECO:0007744" key="31">
    <source>
    </source>
</evidence>
<evidence type="ECO:0007744" key="32">
    <source>
    </source>
</evidence>
<evidence type="ECO:0007744" key="33">
    <source>
    </source>
</evidence>
<evidence type="ECO:0007744" key="34">
    <source>
    </source>
</evidence>
<evidence type="ECO:0007744" key="35">
    <source>
    </source>
</evidence>
<evidence type="ECO:0007744" key="36">
    <source>
    </source>
</evidence>
<evidence type="ECO:0007829" key="37">
    <source>
        <dbReference type="PDB" id="4IIR"/>
    </source>
</evidence>
<evidence type="ECO:0007829" key="38">
    <source>
        <dbReference type="PDB" id="4IJP"/>
    </source>
</evidence>
<evidence type="ECO:0007829" key="39">
    <source>
        <dbReference type="PDB" id="6CNH"/>
    </source>
</evidence>
<evidence type="ECO:0007829" key="40">
    <source>
        <dbReference type="PDB" id="6PK6"/>
    </source>
</evidence>
<feature type="initiator methionine" description="Removed" evidence="24 29 30">
    <location>
        <position position="1"/>
    </location>
</feature>
<feature type="chain" id="PRO_0000086586" description="Serine/threonine-protein kinase PRP4 homolog">
    <location>
        <begin position="2"/>
        <end position="1007"/>
    </location>
</feature>
<feature type="domain" description="Protein kinase" evidence="3">
    <location>
        <begin position="687"/>
        <end position="1006"/>
    </location>
</feature>
<feature type="region of interest" description="Disordered" evidence="5">
    <location>
        <begin position="1"/>
        <end position="99"/>
    </location>
</feature>
<feature type="region of interest" description="Disordered" evidence="5">
    <location>
        <begin position="140"/>
        <end position="533"/>
    </location>
</feature>
<feature type="region of interest" description="Disordered" evidence="5">
    <location>
        <begin position="559"/>
        <end position="583"/>
    </location>
</feature>
<feature type="compositionally biased region" description="Polar residues" evidence="5">
    <location>
        <begin position="1"/>
        <end position="10"/>
    </location>
</feature>
<feature type="compositionally biased region" description="Basic residues" evidence="5">
    <location>
        <begin position="39"/>
        <end position="59"/>
    </location>
</feature>
<feature type="compositionally biased region" description="Basic residues" evidence="5">
    <location>
        <begin position="67"/>
        <end position="81"/>
    </location>
</feature>
<feature type="compositionally biased region" description="Basic and acidic residues" evidence="5">
    <location>
        <begin position="82"/>
        <end position="91"/>
    </location>
</feature>
<feature type="compositionally biased region" description="Low complexity" evidence="5">
    <location>
        <begin position="157"/>
        <end position="168"/>
    </location>
</feature>
<feature type="compositionally biased region" description="Basic residues" evidence="5">
    <location>
        <begin position="179"/>
        <end position="202"/>
    </location>
</feature>
<feature type="compositionally biased region" description="Basic residues" evidence="5">
    <location>
        <begin position="214"/>
        <end position="230"/>
    </location>
</feature>
<feature type="compositionally biased region" description="Basic and acidic residues" evidence="5">
    <location>
        <begin position="247"/>
        <end position="270"/>
    </location>
</feature>
<feature type="compositionally biased region" description="Basic residues" evidence="5">
    <location>
        <begin position="302"/>
        <end position="315"/>
    </location>
</feature>
<feature type="compositionally biased region" description="Basic and acidic residues" evidence="5">
    <location>
        <begin position="316"/>
        <end position="325"/>
    </location>
</feature>
<feature type="compositionally biased region" description="Basic residues" evidence="5">
    <location>
        <begin position="342"/>
        <end position="367"/>
    </location>
</feature>
<feature type="compositionally biased region" description="Basic and acidic residues" evidence="5">
    <location>
        <begin position="395"/>
        <end position="408"/>
    </location>
</feature>
<feature type="compositionally biased region" description="Basic and acidic residues" evidence="5">
    <location>
        <begin position="415"/>
        <end position="429"/>
    </location>
</feature>
<feature type="compositionally biased region" description="Basic residues" evidence="5">
    <location>
        <begin position="438"/>
        <end position="497"/>
    </location>
</feature>
<feature type="compositionally biased region" description="Acidic residues" evidence="5">
    <location>
        <begin position="518"/>
        <end position="533"/>
    </location>
</feature>
<feature type="compositionally biased region" description="Low complexity" evidence="5">
    <location>
        <begin position="562"/>
        <end position="581"/>
    </location>
</feature>
<feature type="active site" description="Proton acceptor" evidence="3 4">
    <location>
        <position position="815"/>
    </location>
</feature>
<feature type="binding site" evidence="3">
    <location>
        <begin position="693"/>
        <end position="701"/>
    </location>
    <ligand>
        <name>ATP</name>
        <dbReference type="ChEBI" id="CHEBI:30616"/>
    </ligand>
</feature>
<feature type="binding site" evidence="3">
    <location>
        <position position="717"/>
    </location>
    <ligand>
        <name>ATP</name>
        <dbReference type="ChEBI" id="CHEBI:30616"/>
    </ligand>
</feature>
<feature type="modified residue" description="N-acetylalanine" evidence="24 29 30">
    <location>
        <position position="2"/>
    </location>
</feature>
<feature type="modified residue" description="Phosphoserine" evidence="1">
    <location>
        <position position="8"/>
    </location>
</feature>
<feature type="modified residue" description="Phosphoserine" evidence="23 26 27 28 31">
    <location>
        <position position="20"/>
    </location>
</feature>
<feature type="modified residue" description="Phosphoserine" evidence="22 23 26 27 28 31">
    <location>
        <position position="23"/>
    </location>
</feature>
<feature type="modified residue" description="Phosphoserine" evidence="22 23 26 27 28">
    <location>
        <position position="32"/>
    </location>
</feature>
<feature type="modified residue" description="Phosphoserine" evidence="22 27 28 31">
    <location>
        <position position="87"/>
    </location>
</feature>
<feature type="modified residue" description="Phosphoserine" evidence="22 27 28 31">
    <location>
        <position position="93"/>
    </location>
</feature>
<feature type="modified residue" description="N6-acetyllysine; alternate" evidence="2">
    <location>
        <position position="99"/>
    </location>
</feature>
<feature type="modified residue" description="Phosphoserine" evidence="32">
    <location>
        <position position="131"/>
    </location>
</feature>
<feature type="modified residue" description="Phosphotyrosine" evidence="23 26">
    <location>
        <position position="140"/>
    </location>
</feature>
<feature type="modified residue" description="Phosphoserine" evidence="23 26 28 32">
    <location>
        <position position="142"/>
    </location>
</feature>
<feature type="modified residue" description="Phosphoserine" evidence="23 26 28">
    <location>
        <position position="144"/>
    </location>
</feature>
<feature type="modified residue" description="Phosphoserine" evidence="31">
    <location>
        <position position="166"/>
    </location>
</feature>
<feature type="modified residue" description="Phosphoserine" evidence="27">
    <location>
        <position position="239"/>
    </location>
</feature>
<feature type="modified residue" description="Phosphoserine" evidence="27">
    <location>
        <position position="241"/>
    </location>
</feature>
<feature type="modified residue" description="Phosphoserine" evidence="23 27 32">
    <location>
        <position position="257"/>
    </location>
</feature>
<feature type="modified residue" description="Phosphoserine" evidence="22 23 27 28 31 32">
    <location>
        <position position="277"/>
    </location>
</feature>
<feature type="modified residue" description="Phosphoserine" evidence="27">
    <location>
        <position position="283"/>
    </location>
</feature>
<feature type="modified residue" description="Phosphoserine" evidence="31">
    <location>
        <position position="292"/>
    </location>
</feature>
<feature type="modified residue" description="Phosphoserine" evidence="28 31">
    <location>
        <position position="294"/>
    </location>
</feature>
<feature type="modified residue" description="Phosphoserine" evidence="28">
    <location>
        <position position="328"/>
    </location>
</feature>
<feature type="modified residue" description="Phosphoserine" evidence="28">
    <location>
        <position position="354"/>
    </location>
</feature>
<feature type="modified residue" description="Phosphoserine" evidence="28">
    <location>
        <position position="356"/>
    </location>
</feature>
<feature type="modified residue" description="Phosphoserine" evidence="22 27 28 31">
    <location>
        <position position="366"/>
    </location>
</feature>
<feature type="modified residue" description="Phosphoserine" evidence="22 27 28 31">
    <location>
        <position position="368"/>
    </location>
</feature>
<feature type="modified residue" description="Phosphothreonine" evidence="28">
    <location>
        <position position="385"/>
    </location>
</feature>
<feature type="modified residue" description="Phosphoserine" evidence="28">
    <location>
        <position position="387"/>
    </location>
</feature>
<feature type="modified residue" description="Phosphoserine" evidence="23 31">
    <location>
        <position position="427"/>
    </location>
</feature>
<feature type="modified residue" description="Phosphoserine" evidence="23 27 28 31">
    <location>
        <position position="431"/>
    </location>
</feature>
<feature type="modified residue" description="Phosphoserine" evidence="23 31">
    <location>
        <position position="437"/>
    </location>
</feature>
<feature type="modified residue" description="Phosphoserine" evidence="26 27 28">
    <location>
        <position position="518"/>
    </location>
</feature>
<feature type="modified residue" description="Phosphoserine" evidence="27 28">
    <location>
        <position position="519"/>
    </location>
</feature>
<feature type="modified residue" description="Phosphoserine" evidence="27 28">
    <location>
        <position position="520"/>
    </location>
</feature>
<feature type="modified residue" description="Phosphoserine" evidence="27">
    <location>
        <position position="565"/>
    </location>
</feature>
<feature type="modified residue" description="Phosphoserine" evidence="23">
    <location>
        <position position="569"/>
    </location>
</feature>
<feature type="modified residue" description="Phosphoserine" evidence="23 26 27 28">
    <location>
        <position position="578"/>
    </location>
</feature>
<feature type="modified residue" description="Phosphoserine" evidence="23 26 27 28">
    <location>
        <position position="580"/>
    </location>
</feature>
<feature type="modified residue" description="N6-acetyllysine" evidence="25">
    <location>
        <position position="717"/>
    </location>
</feature>
<feature type="modified residue" description="Phosphotyrosine" evidence="23 27 28 32">
    <location>
        <position position="849"/>
    </location>
</feature>
<feature type="modified residue" description="Phosphoserine" evidence="1">
    <location>
        <position position="852"/>
    </location>
</feature>
<feature type="cross-link" description="Glycyl lysine isopeptide (Lys-Gly) (interchain with G-Cter in SUMO2); alternate" evidence="36">
    <location>
        <position position="99"/>
    </location>
</feature>
<feature type="cross-link" description="Glycyl lysine isopeptide (Lys-Gly) (interchain with G-Cter in SUMO2)" evidence="36">
    <location>
        <position position="111"/>
    </location>
</feature>
<feature type="cross-link" description="Glycyl lysine isopeptide (Lys-Gly) (interchain with G-Cter in SUMO1); alternate" evidence="33">
    <location>
        <position position="117"/>
    </location>
</feature>
<feature type="cross-link" description="Glycyl lysine isopeptide (Lys-Gly) (interchain with G-Cter in SUMO2); alternate" evidence="34 35 36">
    <location>
        <position position="117"/>
    </location>
</feature>
<feature type="cross-link" description="Glycyl lysine isopeptide (Lys-Gly) (interchain with G-Cter in SUMO2)" evidence="34 36">
    <location>
        <position position="170"/>
    </location>
</feature>
<feature type="cross-link" description="Glycyl lysine isopeptide (Lys-Gly) (interchain with G-Cter in SUMO2)" evidence="36">
    <location>
        <position position="177"/>
    </location>
</feature>
<feature type="cross-link" description="Glycyl lysine isopeptide (Lys-Gly) (interchain with G-Cter in SUMO2)" evidence="36">
    <location>
        <position position="593"/>
    </location>
</feature>
<feature type="cross-link" description="Glycyl lysine isopeptide (Lys-Gly) (interchain with G-Cter in SUMO2)" evidence="36">
    <location>
        <position position="659"/>
    </location>
</feature>
<feature type="sequence variant" id="VAR_046969" description="In dbSNP:rs9503893." evidence="7 9 10 17 22 23 24 27 28 31">
    <original>I</original>
    <variation>V</variation>
    <location>
        <position position="83"/>
    </location>
</feature>
<feature type="sequence variant" id="VAR_047798" description="In dbSNP:rs56267049." evidence="12">
    <original>I</original>
    <variation>V</variation>
    <location>
        <position position="584"/>
    </location>
</feature>
<feature type="sequence variant" id="VAR_035633" description="In a breast cancer sample; somatic mutation; dbSNP:rs1230491406." evidence="11 12">
    <original>F</original>
    <variation>L</variation>
    <location>
        <position position="658"/>
    </location>
</feature>
<feature type="mutagenesis site" description="Loss of kinase activity." evidence="16">
    <original>K</original>
    <variation>R</variation>
    <location>
        <position position="717"/>
    </location>
</feature>
<feature type="sequence conflict" description="In Ref. 7; AAH34969." evidence="18" ref="7">
    <original>P</original>
    <variation>T</variation>
    <location>
        <position position="468"/>
    </location>
</feature>
<feature type="sequence conflict" description="In Ref. 4; BAF83933." evidence="18" ref="4">
    <original>K</original>
    <variation>R</variation>
    <location>
        <position position="610"/>
    </location>
</feature>
<feature type="sequence conflict" description="In Ref. 7; AAH34969." evidence="18" ref="7">
    <original>F</original>
    <variation>L</variation>
    <location>
        <position position="754"/>
    </location>
</feature>
<feature type="sequence conflict" description="In Ref. 7; AAH34969." evidence="18" ref="7">
    <original>V</original>
    <variation>F</variation>
    <location>
        <position position="851"/>
    </location>
</feature>
<feature type="strand" evidence="37">
    <location>
        <begin position="671"/>
        <end position="673"/>
    </location>
</feature>
<feature type="turn" evidence="37">
    <location>
        <begin position="684"/>
        <end position="686"/>
    </location>
</feature>
<feature type="strand" evidence="37">
    <location>
        <begin position="687"/>
        <end position="694"/>
    </location>
</feature>
<feature type="strand" evidence="38">
    <location>
        <begin position="697"/>
        <end position="699"/>
    </location>
</feature>
<feature type="strand" evidence="37">
    <location>
        <begin position="700"/>
        <end position="706"/>
    </location>
</feature>
<feature type="helix" evidence="37">
    <location>
        <begin position="707"/>
        <end position="709"/>
    </location>
</feature>
<feature type="strand" evidence="37">
    <location>
        <begin position="713"/>
        <end position="718"/>
    </location>
</feature>
<feature type="helix" evidence="37">
    <location>
        <begin position="724"/>
        <end position="742"/>
    </location>
</feature>
<feature type="strand" evidence="37">
    <location>
        <begin position="753"/>
        <end position="759"/>
    </location>
</feature>
<feature type="strand" evidence="37">
    <location>
        <begin position="762"/>
        <end position="767"/>
    </location>
</feature>
<feature type="helix" evidence="37">
    <location>
        <begin position="774"/>
        <end position="781"/>
    </location>
</feature>
<feature type="turn" evidence="39">
    <location>
        <begin position="783"/>
        <end position="785"/>
    </location>
</feature>
<feature type="helix" evidence="37">
    <location>
        <begin position="789"/>
        <end position="808"/>
    </location>
</feature>
<feature type="helix" evidence="37">
    <location>
        <begin position="818"/>
        <end position="820"/>
    </location>
</feature>
<feature type="strand" evidence="37">
    <location>
        <begin position="821"/>
        <end position="823"/>
    </location>
</feature>
<feature type="strand" evidence="37">
    <location>
        <begin position="830"/>
        <end position="832"/>
    </location>
</feature>
<feature type="strand" evidence="37">
    <location>
        <begin position="839"/>
        <end position="842"/>
    </location>
</feature>
<feature type="helix" evidence="37">
    <location>
        <begin position="853"/>
        <end position="855"/>
    </location>
</feature>
<feature type="helix" evidence="37">
    <location>
        <begin position="858"/>
        <end position="862"/>
    </location>
</feature>
<feature type="helix" evidence="37">
    <location>
        <begin position="869"/>
        <end position="884"/>
    </location>
</feature>
<feature type="helix" evidence="37">
    <location>
        <begin position="894"/>
        <end position="905"/>
    </location>
</feature>
<feature type="helix" evidence="37">
    <location>
        <begin position="910"/>
        <end position="915"/>
    </location>
</feature>
<feature type="turn" evidence="37">
    <location>
        <begin position="920"/>
        <end position="922"/>
    </location>
</feature>
<feature type="strand" evidence="37">
    <location>
        <begin position="929"/>
        <end position="932"/>
    </location>
</feature>
<feature type="strand" evidence="40">
    <location>
        <begin position="936"/>
        <end position="939"/>
    </location>
</feature>
<feature type="strand" evidence="37">
    <location>
        <begin position="943"/>
        <end position="947"/>
    </location>
</feature>
<feature type="helix" evidence="37">
    <location>
        <begin position="955"/>
        <end position="959"/>
    </location>
</feature>
<feature type="helix" evidence="37">
    <location>
        <begin position="967"/>
        <end position="983"/>
    </location>
</feature>
<feature type="helix" evidence="39">
    <location>
        <begin position="988"/>
        <end position="990"/>
    </location>
</feature>
<feature type="helix" evidence="37">
    <location>
        <begin position="994"/>
        <end position="998"/>
    </location>
</feature>
<feature type="helix" evidence="37">
    <location>
        <begin position="1001"/>
        <end position="1004"/>
    </location>
</feature>
<proteinExistence type="evidence at protein level"/>
<reference key="1">
    <citation type="journal article" date="2001" name="J. Biol. Chem.">
        <title>Cloning of human PRP4 reveals interaction with Clk1.</title>
        <authorList>
            <person name="Kojima T."/>
            <person name="Zama T."/>
            <person name="Wada K."/>
            <person name="Onogi H."/>
            <person name="Hagiwara M."/>
        </authorList>
    </citation>
    <scope>NUCLEOTIDE SEQUENCE [MRNA]</scope>
    <scope>CHARACTERIZATION</scope>
    <scope>VARIANT VAL-83</scope>
    <scope>PHOSPHORYLATION BY CLK1</scope>
</reference>
<reference key="2">
    <citation type="journal article" date="2002" name="Mol. Cell. Biol.">
        <title>Mammalian PRP4 kinase copurifies and interacts with components of both the U5 snRNP and the N-CoR deacetylase complexes.</title>
        <authorList>
            <person name="Dellaire G."/>
            <person name="Makarov E.M."/>
            <person name="Cowger J.J.M."/>
            <person name="Longman D."/>
            <person name="Sutherland H.G.E."/>
            <person name="Luehrmann R."/>
            <person name="Torchia J."/>
            <person name="Bickmore W.A."/>
        </authorList>
    </citation>
    <scope>NUCLEOTIDE SEQUENCE [MRNA]</scope>
    <scope>VARIANT VAL-83</scope>
    <scope>FUNCTION</scope>
    <scope>SUBCELLULAR LOCATION</scope>
    <scope>SUBUNIT</scope>
    <scope>PHOSPHORYLATION</scope>
</reference>
<reference key="3">
    <citation type="journal article" date="1998" name="DNA Res.">
        <title>Prediction of the coding sequences of unidentified human genes. IX. The complete sequences of 100 new cDNA clones from brain which can code for large proteins in vitro.</title>
        <authorList>
            <person name="Nagase T."/>
            <person name="Ishikawa K."/>
            <person name="Miyajima N."/>
            <person name="Tanaka A."/>
            <person name="Kotani H."/>
            <person name="Nomura N."/>
            <person name="Ohara O."/>
        </authorList>
    </citation>
    <scope>NUCLEOTIDE SEQUENCE [LARGE SCALE MRNA]</scope>
    <scope>VARIANT VAL-83</scope>
    <source>
        <tissue>Brain</tissue>
    </source>
</reference>
<reference key="4">
    <citation type="journal article" date="2004" name="Nat. Genet.">
        <title>Complete sequencing and characterization of 21,243 full-length human cDNAs.</title>
        <authorList>
            <person name="Ota T."/>
            <person name="Suzuki Y."/>
            <person name="Nishikawa T."/>
            <person name="Otsuki T."/>
            <person name="Sugiyama T."/>
            <person name="Irie R."/>
            <person name="Wakamatsu A."/>
            <person name="Hayashi K."/>
            <person name="Sato H."/>
            <person name="Nagai K."/>
            <person name="Kimura K."/>
            <person name="Makita H."/>
            <person name="Sekine M."/>
            <person name="Obayashi M."/>
            <person name="Nishi T."/>
            <person name="Shibahara T."/>
            <person name="Tanaka T."/>
            <person name="Ishii S."/>
            <person name="Yamamoto J."/>
            <person name="Saito K."/>
            <person name="Kawai Y."/>
            <person name="Isono Y."/>
            <person name="Nakamura Y."/>
            <person name="Nagahari K."/>
            <person name="Murakami K."/>
            <person name="Yasuda T."/>
            <person name="Iwayanagi T."/>
            <person name="Wagatsuma M."/>
            <person name="Shiratori A."/>
            <person name="Sudo H."/>
            <person name="Hosoiri T."/>
            <person name="Kaku Y."/>
            <person name="Kodaira H."/>
            <person name="Kondo H."/>
            <person name="Sugawara M."/>
            <person name="Takahashi M."/>
            <person name="Kanda K."/>
            <person name="Yokoi T."/>
            <person name="Furuya T."/>
            <person name="Kikkawa E."/>
            <person name="Omura Y."/>
            <person name="Abe K."/>
            <person name="Kamihara K."/>
            <person name="Katsuta N."/>
            <person name="Sato K."/>
            <person name="Tanikawa M."/>
            <person name="Yamazaki M."/>
            <person name="Ninomiya K."/>
            <person name="Ishibashi T."/>
            <person name="Yamashita H."/>
            <person name="Murakawa K."/>
            <person name="Fujimori K."/>
            <person name="Tanai H."/>
            <person name="Kimata M."/>
            <person name="Watanabe M."/>
            <person name="Hiraoka S."/>
            <person name="Chiba Y."/>
            <person name="Ishida S."/>
            <person name="Ono Y."/>
            <person name="Takiguchi S."/>
            <person name="Watanabe S."/>
            <person name="Yosida M."/>
            <person name="Hotuta T."/>
            <person name="Kusano J."/>
            <person name="Kanehori K."/>
            <person name="Takahashi-Fujii A."/>
            <person name="Hara H."/>
            <person name="Tanase T.-O."/>
            <person name="Nomura Y."/>
            <person name="Togiya S."/>
            <person name="Komai F."/>
            <person name="Hara R."/>
            <person name="Takeuchi K."/>
            <person name="Arita M."/>
            <person name="Imose N."/>
            <person name="Musashino K."/>
            <person name="Yuuki H."/>
            <person name="Oshima A."/>
            <person name="Sasaki N."/>
            <person name="Aotsuka S."/>
            <person name="Yoshikawa Y."/>
            <person name="Matsunawa H."/>
            <person name="Ichihara T."/>
            <person name="Shiohata N."/>
            <person name="Sano S."/>
            <person name="Moriya S."/>
            <person name="Momiyama H."/>
            <person name="Satoh N."/>
            <person name="Takami S."/>
            <person name="Terashima Y."/>
            <person name="Suzuki O."/>
            <person name="Nakagawa S."/>
            <person name="Senoh A."/>
            <person name="Mizoguchi H."/>
            <person name="Goto Y."/>
            <person name="Shimizu F."/>
            <person name="Wakebe H."/>
            <person name="Hishigaki H."/>
            <person name="Watanabe T."/>
            <person name="Sugiyama A."/>
            <person name="Takemoto M."/>
            <person name="Kawakami B."/>
            <person name="Yamazaki M."/>
            <person name="Watanabe K."/>
            <person name="Kumagai A."/>
            <person name="Itakura S."/>
            <person name="Fukuzumi Y."/>
            <person name="Fujimori Y."/>
            <person name="Komiyama M."/>
            <person name="Tashiro H."/>
            <person name="Tanigami A."/>
            <person name="Fujiwara T."/>
            <person name="Ono T."/>
            <person name="Yamada K."/>
            <person name="Fujii Y."/>
            <person name="Ozaki K."/>
            <person name="Hirao M."/>
            <person name="Ohmori Y."/>
            <person name="Kawabata A."/>
            <person name="Hikiji T."/>
            <person name="Kobatake N."/>
            <person name="Inagaki H."/>
            <person name="Ikema Y."/>
            <person name="Okamoto S."/>
            <person name="Okitani R."/>
            <person name="Kawakami T."/>
            <person name="Noguchi S."/>
            <person name="Itoh T."/>
            <person name="Shigeta K."/>
            <person name="Senba T."/>
            <person name="Matsumura K."/>
            <person name="Nakajima Y."/>
            <person name="Mizuno T."/>
            <person name="Morinaga M."/>
            <person name="Sasaki M."/>
            <person name="Togashi T."/>
            <person name="Oyama M."/>
            <person name="Hata H."/>
            <person name="Watanabe M."/>
            <person name="Komatsu T."/>
            <person name="Mizushima-Sugano J."/>
            <person name="Satoh T."/>
            <person name="Shirai Y."/>
            <person name="Takahashi Y."/>
            <person name="Nakagawa K."/>
            <person name="Okumura K."/>
            <person name="Nagase T."/>
            <person name="Nomura N."/>
            <person name="Kikuchi H."/>
            <person name="Masuho Y."/>
            <person name="Yamashita R."/>
            <person name="Nakai K."/>
            <person name="Yada T."/>
            <person name="Nakamura Y."/>
            <person name="Ohara O."/>
            <person name="Isogai T."/>
            <person name="Sugano S."/>
        </authorList>
    </citation>
    <scope>NUCLEOTIDE SEQUENCE [LARGE SCALE MRNA]</scope>
    <scope>VARIANT VAL-83</scope>
</reference>
<reference key="5">
    <citation type="journal article" date="2003" name="Nature">
        <title>The DNA sequence and analysis of human chromosome 6.</title>
        <authorList>
            <person name="Mungall A.J."/>
            <person name="Palmer S.A."/>
            <person name="Sims S.K."/>
            <person name="Edwards C.A."/>
            <person name="Ashurst J.L."/>
            <person name="Wilming L."/>
            <person name="Jones M.C."/>
            <person name="Horton R."/>
            <person name="Hunt S.E."/>
            <person name="Scott C.E."/>
            <person name="Gilbert J.G.R."/>
            <person name="Clamp M.E."/>
            <person name="Bethel G."/>
            <person name="Milne S."/>
            <person name="Ainscough R."/>
            <person name="Almeida J.P."/>
            <person name="Ambrose K.D."/>
            <person name="Andrews T.D."/>
            <person name="Ashwell R.I.S."/>
            <person name="Babbage A.K."/>
            <person name="Bagguley C.L."/>
            <person name="Bailey J."/>
            <person name="Banerjee R."/>
            <person name="Barker D.J."/>
            <person name="Barlow K.F."/>
            <person name="Bates K."/>
            <person name="Beare D.M."/>
            <person name="Beasley H."/>
            <person name="Beasley O."/>
            <person name="Bird C.P."/>
            <person name="Blakey S.E."/>
            <person name="Bray-Allen S."/>
            <person name="Brook J."/>
            <person name="Brown A.J."/>
            <person name="Brown J.Y."/>
            <person name="Burford D.C."/>
            <person name="Burrill W."/>
            <person name="Burton J."/>
            <person name="Carder C."/>
            <person name="Carter N.P."/>
            <person name="Chapman J.C."/>
            <person name="Clark S.Y."/>
            <person name="Clark G."/>
            <person name="Clee C.M."/>
            <person name="Clegg S."/>
            <person name="Cobley V."/>
            <person name="Collier R.E."/>
            <person name="Collins J.E."/>
            <person name="Colman L.K."/>
            <person name="Corby N.R."/>
            <person name="Coville G.J."/>
            <person name="Culley K.M."/>
            <person name="Dhami P."/>
            <person name="Davies J."/>
            <person name="Dunn M."/>
            <person name="Earthrowl M.E."/>
            <person name="Ellington A.E."/>
            <person name="Evans K.A."/>
            <person name="Faulkner L."/>
            <person name="Francis M.D."/>
            <person name="Frankish A."/>
            <person name="Frankland J."/>
            <person name="French L."/>
            <person name="Garner P."/>
            <person name="Garnett J."/>
            <person name="Ghori M.J."/>
            <person name="Gilby L.M."/>
            <person name="Gillson C.J."/>
            <person name="Glithero R.J."/>
            <person name="Grafham D.V."/>
            <person name="Grant M."/>
            <person name="Gribble S."/>
            <person name="Griffiths C."/>
            <person name="Griffiths M.N.D."/>
            <person name="Hall R."/>
            <person name="Halls K.S."/>
            <person name="Hammond S."/>
            <person name="Harley J.L."/>
            <person name="Hart E.A."/>
            <person name="Heath P.D."/>
            <person name="Heathcott R."/>
            <person name="Holmes S.J."/>
            <person name="Howden P.J."/>
            <person name="Howe K.L."/>
            <person name="Howell G.R."/>
            <person name="Huckle E."/>
            <person name="Humphray S.J."/>
            <person name="Humphries M.D."/>
            <person name="Hunt A.R."/>
            <person name="Johnson C.M."/>
            <person name="Joy A.A."/>
            <person name="Kay M."/>
            <person name="Keenan S.J."/>
            <person name="Kimberley A.M."/>
            <person name="King A."/>
            <person name="Laird G.K."/>
            <person name="Langford C."/>
            <person name="Lawlor S."/>
            <person name="Leongamornlert D.A."/>
            <person name="Leversha M."/>
            <person name="Lloyd C.R."/>
            <person name="Lloyd D.M."/>
            <person name="Loveland J.E."/>
            <person name="Lovell J."/>
            <person name="Martin S."/>
            <person name="Mashreghi-Mohammadi M."/>
            <person name="Maslen G.L."/>
            <person name="Matthews L."/>
            <person name="McCann O.T."/>
            <person name="McLaren S.J."/>
            <person name="McLay K."/>
            <person name="McMurray A."/>
            <person name="Moore M.J.F."/>
            <person name="Mullikin J.C."/>
            <person name="Niblett D."/>
            <person name="Nickerson T."/>
            <person name="Novik K.L."/>
            <person name="Oliver K."/>
            <person name="Overton-Larty E.K."/>
            <person name="Parker A."/>
            <person name="Patel R."/>
            <person name="Pearce A.V."/>
            <person name="Peck A.I."/>
            <person name="Phillimore B.J.C.T."/>
            <person name="Phillips S."/>
            <person name="Plumb R.W."/>
            <person name="Porter K.M."/>
            <person name="Ramsey Y."/>
            <person name="Ranby S.A."/>
            <person name="Rice C.M."/>
            <person name="Ross M.T."/>
            <person name="Searle S.M."/>
            <person name="Sehra H.K."/>
            <person name="Sheridan E."/>
            <person name="Skuce C.D."/>
            <person name="Smith S."/>
            <person name="Smith M."/>
            <person name="Spraggon L."/>
            <person name="Squares S.L."/>
            <person name="Steward C.A."/>
            <person name="Sycamore N."/>
            <person name="Tamlyn-Hall G."/>
            <person name="Tester J."/>
            <person name="Theaker A.J."/>
            <person name="Thomas D.W."/>
            <person name="Thorpe A."/>
            <person name="Tracey A."/>
            <person name="Tromans A."/>
            <person name="Tubby B."/>
            <person name="Wall M."/>
            <person name="Wallis J.M."/>
            <person name="West A.P."/>
            <person name="White S.S."/>
            <person name="Whitehead S.L."/>
            <person name="Whittaker H."/>
            <person name="Wild A."/>
            <person name="Willey D.J."/>
            <person name="Wilmer T.E."/>
            <person name="Wood J.M."/>
            <person name="Wray P.W."/>
            <person name="Wyatt J.C."/>
            <person name="Young L."/>
            <person name="Younger R.M."/>
            <person name="Bentley D.R."/>
            <person name="Coulson A."/>
            <person name="Durbin R.M."/>
            <person name="Hubbard T."/>
            <person name="Sulston J.E."/>
            <person name="Dunham I."/>
            <person name="Rogers J."/>
            <person name="Beck S."/>
        </authorList>
    </citation>
    <scope>NUCLEOTIDE SEQUENCE [LARGE SCALE GENOMIC DNA]</scope>
</reference>
<reference key="6">
    <citation type="submission" date="2005-07" db="EMBL/GenBank/DDBJ databases">
        <authorList>
            <person name="Mural R.J."/>
            <person name="Istrail S."/>
            <person name="Sutton G.G."/>
            <person name="Florea L."/>
            <person name="Halpern A.L."/>
            <person name="Mobarry C.M."/>
            <person name="Lippert R."/>
            <person name="Walenz B."/>
            <person name="Shatkay H."/>
            <person name="Dew I."/>
            <person name="Miller J.R."/>
            <person name="Flanigan M.J."/>
            <person name="Edwards N.J."/>
            <person name="Bolanos R."/>
            <person name="Fasulo D."/>
            <person name="Halldorsson B.V."/>
            <person name="Hannenhalli S."/>
            <person name="Turner R."/>
            <person name="Yooseph S."/>
            <person name="Lu F."/>
            <person name="Nusskern D.R."/>
            <person name="Shue B.C."/>
            <person name="Zheng X.H."/>
            <person name="Zhong F."/>
            <person name="Delcher A.L."/>
            <person name="Huson D.H."/>
            <person name="Kravitz S.A."/>
            <person name="Mouchard L."/>
            <person name="Reinert K."/>
            <person name="Remington K.A."/>
            <person name="Clark A.G."/>
            <person name="Waterman M.S."/>
            <person name="Eichler E.E."/>
            <person name="Adams M.D."/>
            <person name="Hunkapiller M.W."/>
            <person name="Myers E.W."/>
            <person name="Venter J.C."/>
        </authorList>
    </citation>
    <scope>NUCLEOTIDE SEQUENCE [LARGE SCALE GENOMIC DNA]</scope>
</reference>
<reference key="7">
    <citation type="journal article" date="2004" name="Genome Res.">
        <title>The status, quality, and expansion of the NIH full-length cDNA project: the Mammalian Gene Collection (MGC).</title>
        <authorList>
            <consortium name="The MGC Project Team"/>
        </authorList>
    </citation>
    <scope>NUCLEOTIDE SEQUENCE [LARGE SCALE MRNA]</scope>
    <source>
        <tissue>Brain</tissue>
        <tissue>Lung</tissue>
    </source>
</reference>
<reference key="8">
    <citation type="journal article" date="1997" name="Nucleic Acids Res.">
        <title>Functional analysis of the fission yeast Prp4 protein kinase involved in pre-mRNA splicing and isolation of a putative mammalian homologue.</title>
        <authorList>
            <person name="Gross T."/>
            <person name="Lutzelberger M."/>
            <person name="Wiegmann H."/>
            <person name="Klingenhoff A."/>
            <person name="Shenoy S."/>
            <person name="Kaeufer N.F."/>
        </authorList>
    </citation>
    <scope>NUCLEOTIDE SEQUENCE [MRNA] OF 512-1007</scope>
</reference>
<reference key="9">
    <citation type="journal article" date="2000" name="Biochem. Biophys. Res. Commun.">
        <title>Characterization of hPRP4 kinase activation: potential role in signaling.</title>
        <authorList>
            <person name="Huang Y."/>
            <person name="Deng T."/>
            <person name="Winston B.W."/>
        </authorList>
    </citation>
    <scope>FUNCTION</scope>
    <scope>CATALYTIC ACTIVITY</scope>
</reference>
<reference key="10">
    <citation type="journal article" date="2002" name="RNA">
        <title>Purification and characterization of native spliceosomes suitable for three-dimensional structural analysis.</title>
        <authorList>
            <person name="Jurica M.S."/>
            <person name="Licklider L.J."/>
            <person name="Gygi S.P."/>
            <person name="Grigorieff N."/>
            <person name="Moore M.J."/>
        </authorList>
    </citation>
    <scope>IDENTIFICATION BY MASS SPECTROMETRY</scope>
    <scope>IDENTIFICATION IN THE SPLICEOSOMAL C COMPLEX</scope>
</reference>
<reference key="11">
    <citation type="journal article" date="2005" name="Nat. Biotechnol.">
        <title>Immunoaffinity profiling of tyrosine phosphorylation in cancer cells.</title>
        <authorList>
            <person name="Rush J."/>
            <person name="Moritz A."/>
            <person name="Lee K.A."/>
            <person name="Guo A."/>
            <person name="Goss V.L."/>
            <person name="Spek E.J."/>
            <person name="Zhang H."/>
            <person name="Zha X.-M."/>
            <person name="Polakiewicz R.D."/>
            <person name="Comb M.J."/>
        </authorList>
    </citation>
    <scope>IDENTIFICATION BY MASS SPECTROMETRY [LARGE SCALE ANALYSIS]</scope>
</reference>
<reference key="12">
    <citation type="journal article" date="2006" name="Cell">
        <title>Global, in vivo, and site-specific phosphorylation dynamics in signaling networks.</title>
        <authorList>
            <person name="Olsen J.V."/>
            <person name="Blagoev B."/>
            <person name="Gnad F."/>
            <person name="Macek B."/>
            <person name="Kumar C."/>
            <person name="Mortensen P."/>
            <person name="Mann M."/>
        </authorList>
    </citation>
    <scope>PHOSPHORYLATION [LARGE SCALE ANALYSIS] AT SER-23; SER-32; SER-87; SER-93; SER-277; SER-366 AND SER-368</scope>
    <scope>VARIANT [LARGE SCALE ANALYSIS] VAL-83</scope>
    <scope>IDENTIFICATION BY MASS SPECTROMETRY [LARGE SCALE ANALYSIS]</scope>
    <source>
        <tissue>Cervix carcinoma</tissue>
    </source>
</reference>
<reference key="13">
    <citation type="journal article" date="2007" name="J. Cell Biol.">
        <title>PRP4 is a spindle assembly checkpoint protein required for MPS1, MAD1, and MAD2 localization to the kinetochores.</title>
        <authorList>
            <person name="Montembault E."/>
            <person name="Dutertre S."/>
            <person name="Prigent C."/>
            <person name="Giet R."/>
        </authorList>
    </citation>
    <scope>FUNCTION</scope>
    <scope>SUBCELLULAR LOCATION</scope>
</reference>
<reference key="14">
    <citation type="journal article" date="2007" name="J. Immunol.">
        <title>Interaction of PRP4 with Kruppel-like factor 13 regulates CCL5 transcription.</title>
        <authorList>
            <person name="Huang B."/>
            <person name="Ahn Y.T."/>
            <person name="McPherson L."/>
            <person name="Clayberger C."/>
            <person name="Krensky A.M."/>
        </authorList>
    </citation>
    <scope>FUNCTION</scope>
</reference>
<reference key="15">
    <citation type="journal article" date="2008" name="Proc. Natl. Acad. Sci. U.S.A.">
        <title>A quantitative atlas of mitotic phosphorylation.</title>
        <authorList>
            <person name="Dephoure N."/>
            <person name="Zhou C."/>
            <person name="Villen J."/>
            <person name="Beausoleil S.A."/>
            <person name="Bakalarski C.E."/>
            <person name="Elledge S.J."/>
            <person name="Gygi S.P."/>
        </authorList>
    </citation>
    <scope>PHOSPHORYLATION [LARGE SCALE ANALYSIS] AT SER-20; SER-23; SER-32; TYR-140; SER-142; SER-144; SER-257; SER-277; SER-427; SER-431; SER-437; SER-569; SER-578; SER-580 AND TYR-849</scope>
    <scope>VARIANT [LARGE SCALE ANALYSIS] VAL-83</scope>
    <scope>IDENTIFICATION BY MASS SPECTROMETRY [LARGE SCALE ANALYSIS]</scope>
    <source>
        <tissue>Cervix carcinoma</tissue>
    </source>
</reference>
<reference key="16">
    <citation type="journal article" date="2009" name="Anal. Chem.">
        <title>Lys-N and trypsin cover complementary parts of the phosphoproteome in a refined SCX-based approach.</title>
        <authorList>
            <person name="Gauci S."/>
            <person name="Helbig A.O."/>
            <person name="Slijper M."/>
            <person name="Krijgsveld J."/>
            <person name="Heck A.J."/>
            <person name="Mohammed S."/>
        </authorList>
    </citation>
    <scope>ACETYLATION [LARGE SCALE ANALYSIS] AT ALA-2</scope>
    <scope>VARIANT [LARGE SCALE ANALYSIS] VAL-83</scope>
    <scope>CLEAVAGE OF INITIATOR METHIONINE [LARGE SCALE ANALYSIS]</scope>
    <scope>IDENTIFICATION BY MASS SPECTROMETRY [LARGE SCALE ANALYSIS]</scope>
</reference>
<reference key="17">
    <citation type="journal article" date="2009" name="Sci. Signal.">
        <title>Quantitative phosphoproteomic analysis of T cell receptor signaling reveals system-wide modulation of protein-protein interactions.</title>
        <authorList>
            <person name="Mayya V."/>
            <person name="Lundgren D.H."/>
            <person name="Hwang S.-I."/>
            <person name="Rezaul K."/>
            <person name="Wu L."/>
            <person name="Eng J.K."/>
            <person name="Rodionov V."/>
            <person name="Han D.K."/>
        </authorList>
    </citation>
    <scope>PHOSPHORYLATION [LARGE SCALE ANALYSIS] AT SER-20; SER-23; SER-32; TYR-140; SER-142; SER-144; SER-518; SER-578 AND SER-580</scope>
    <scope>IDENTIFICATION BY MASS SPECTROMETRY [LARGE SCALE ANALYSIS]</scope>
    <source>
        <tissue>Leukemic T-cell</tissue>
    </source>
</reference>
<reference key="18">
    <citation type="journal article" date="2009" name="Science">
        <title>Lysine acetylation targets protein complexes and co-regulates major cellular functions.</title>
        <authorList>
            <person name="Choudhary C."/>
            <person name="Kumar C."/>
            <person name="Gnad F."/>
            <person name="Nielsen M.L."/>
            <person name="Rehman M."/>
            <person name="Walther T.C."/>
            <person name="Olsen J.V."/>
            <person name="Mann M."/>
        </authorList>
    </citation>
    <scope>ACETYLATION [LARGE SCALE ANALYSIS] AT LYS-717</scope>
    <scope>IDENTIFICATION BY MASS SPECTROMETRY [LARGE SCALE ANALYSIS]</scope>
</reference>
<reference key="19">
    <citation type="journal article" date="2010" name="Nat. Struct. Mol. Biol.">
        <title>Human PRP4 kinase is required for stable tri-snRNP association during spliceosomal B complex formation.</title>
        <authorList>
            <person name="Schneider M."/>
            <person name="Hsiao H.H."/>
            <person name="Will C.L."/>
            <person name="Giet R."/>
            <person name="Urlaub H."/>
            <person name="Luehrmann R."/>
        </authorList>
    </citation>
    <scope>FUNCTION</scope>
    <scope>CATALYTIC ACTIVITY</scope>
</reference>
<reference key="20">
    <citation type="journal article" date="2010" name="Sci. Signal.">
        <title>Quantitative phosphoproteomics reveals widespread full phosphorylation site occupancy during mitosis.</title>
        <authorList>
            <person name="Olsen J.V."/>
            <person name="Vermeulen M."/>
            <person name="Santamaria A."/>
            <person name="Kumar C."/>
            <person name="Miller M.L."/>
            <person name="Jensen L.J."/>
            <person name="Gnad F."/>
            <person name="Cox J."/>
            <person name="Jensen T.S."/>
            <person name="Nigg E.A."/>
            <person name="Brunak S."/>
            <person name="Mann M."/>
        </authorList>
    </citation>
    <scope>PHOSPHORYLATION [LARGE SCALE ANALYSIS] AT SER-20; SER-23; SER-32; SER-87; SER-93; SER-239; SER-241; SER-257; SER-277; SER-283; SER-366; SER-368; SER-431; SER-518; SER-519; SER-520; SER-565; SER-578; SER-580 AND TYR-849</scope>
    <scope>VARIANT [LARGE SCALE ANALYSIS] VAL-83</scope>
    <scope>IDENTIFICATION BY MASS SPECTROMETRY [LARGE SCALE ANALYSIS]</scope>
    <source>
        <tissue>Cervix carcinoma</tissue>
    </source>
</reference>
<reference key="21">
    <citation type="journal article" date="2011" name="BMC Syst. Biol.">
        <title>Initial characterization of the human central proteome.</title>
        <authorList>
            <person name="Burkard T.R."/>
            <person name="Planyavsky M."/>
            <person name="Kaupe I."/>
            <person name="Breitwieser F.P."/>
            <person name="Buerckstuemmer T."/>
            <person name="Bennett K.L."/>
            <person name="Superti-Furga G."/>
            <person name="Colinge J."/>
        </authorList>
    </citation>
    <scope>IDENTIFICATION BY MASS SPECTROMETRY [LARGE SCALE ANALYSIS]</scope>
</reference>
<reference key="22">
    <citation type="journal article" date="2011" name="Sci. Signal.">
        <title>System-wide temporal characterization of the proteome and phosphoproteome of human embryonic stem cell differentiation.</title>
        <authorList>
            <person name="Rigbolt K.T."/>
            <person name="Prokhorova T.A."/>
            <person name="Akimov V."/>
            <person name="Henningsen J."/>
            <person name="Johansen P.T."/>
            <person name="Kratchmarova I."/>
            <person name="Kassem M."/>
            <person name="Mann M."/>
            <person name="Olsen J.V."/>
            <person name="Blagoev B."/>
        </authorList>
    </citation>
    <scope>PHOSPHORYLATION [LARGE SCALE ANALYSIS] AT SER-20; SER-23; SER-32; SER-87; SER-93; SER-142; SER-144; SER-277; SER-294; SER-328; SER-354; SER-356; SER-366; SER-368; THR-385; SER-387; SER-431; SER-518; SER-519; SER-520; SER-578; SER-580 AND TYR-849</scope>
    <scope>VARIANT [LARGE SCALE ANALYSIS] VAL-83</scope>
    <scope>IDENTIFICATION BY MASS SPECTROMETRY [LARGE SCALE ANALYSIS]</scope>
</reference>
<reference key="23">
    <citation type="journal article" date="2012" name="Mol. Cell. Proteomics">
        <title>Comparative large-scale characterisation of plant vs. mammal proteins reveals similar and idiosyncratic N-alpha acetylation features.</title>
        <authorList>
            <person name="Bienvenut W.V."/>
            <person name="Sumpton D."/>
            <person name="Martinez A."/>
            <person name="Lilla S."/>
            <person name="Espagne C."/>
            <person name="Meinnel T."/>
            <person name="Giglione C."/>
        </authorList>
    </citation>
    <scope>ACETYLATION [LARGE SCALE ANALYSIS] AT ALA-2</scope>
    <scope>CLEAVAGE OF INITIATOR METHIONINE [LARGE SCALE ANALYSIS]</scope>
    <scope>IDENTIFICATION BY MASS SPECTROMETRY [LARGE SCALE ANALYSIS]</scope>
</reference>
<reference key="24">
    <citation type="journal article" date="2012" name="Proc. Natl. Acad. Sci. U.S.A.">
        <title>N-terminal acetylome analyses and functional insights of the N-terminal acetyltransferase NatB.</title>
        <authorList>
            <person name="Van Damme P."/>
            <person name="Lasa M."/>
            <person name="Polevoda B."/>
            <person name="Gazquez C."/>
            <person name="Elosegui-Artola A."/>
            <person name="Kim D.S."/>
            <person name="De Juan-Pardo E."/>
            <person name="Demeyer K."/>
            <person name="Hole K."/>
            <person name="Larrea E."/>
            <person name="Timmerman E."/>
            <person name="Prieto J."/>
            <person name="Arnesen T."/>
            <person name="Sherman F."/>
            <person name="Gevaert K."/>
            <person name="Aldabe R."/>
        </authorList>
    </citation>
    <scope>ACETYLATION [LARGE SCALE ANALYSIS] AT ALA-2</scope>
    <scope>CLEAVAGE OF INITIATOR METHIONINE [LARGE SCALE ANALYSIS]</scope>
    <scope>IDENTIFICATION BY MASS SPECTROMETRY [LARGE SCALE ANALYSIS]</scope>
</reference>
<reference key="25">
    <citation type="journal article" date="2013" name="J. Proteome Res.">
        <title>Toward a comprehensive characterization of a human cancer cell phosphoproteome.</title>
        <authorList>
            <person name="Zhou H."/>
            <person name="Di Palma S."/>
            <person name="Preisinger C."/>
            <person name="Peng M."/>
            <person name="Polat A.N."/>
            <person name="Heck A.J."/>
            <person name="Mohammed S."/>
        </authorList>
    </citation>
    <scope>PHOSPHORYLATION [LARGE SCALE ANALYSIS] AT SER-20; SER-23; SER-87; SER-93; SER-166; SER-277; SER-292; SER-294; SER-366; SER-368; SER-427; SER-431 AND SER-437</scope>
    <scope>VARIANT [LARGE SCALE ANALYSIS] VAL-83</scope>
    <scope>IDENTIFICATION BY MASS SPECTROMETRY [LARGE SCALE ANALYSIS]</scope>
    <source>
        <tissue>Cervix carcinoma</tissue>
        <tissue>Erythroleukemia</tissue>
    </source>
</reference>
<reference key="26">
    <citation type="journal article" date="2014" name="J. Proteomics">
        <title>An enzyme assisted RP-RPLC approach for in-depth analysis of human liver phosphoproteome.</title>
        <authorList>
            <person name="Bian Y."/>
            <person name="Song C."/>
            <person name="Cheng K."/>
            <person name="Dong M."/>
            <person name="Wang F."/>
            <person name="Huang J."/>
            <person name="Sun D."/>
            <person name="Wang L."/>
            <person name="Ye M."/>
            <person name="Zou H."/>
        </authorList>
    </citation>
    <scope>PHOSPHORYLATION [LARGE SCALE ANALYSIS] AT SER-131; SER-142; SER-257; SER-277 AND TYR-849</scope>
    <scope>IDENTIFICATION BY MASS SPECTROMETRY [LARGE SCALE ANALYSIS]</scope>
    <source>
        <tissue>Liver</tissue>
    </source>
</reference>
<reference key="27">
    <citation type="journal article" date="2014" name="Nat. Struct. Mol. Biol.">
        <title>Uncovering global SUMOylation signaling networks in a site-specific manner.</title>
        <authorList>
            <person name="Hendriks I.A."/>
            <person name="D'Souza R.C."/>
            <person name="Yang B."/>
            <person name="Verlaan-de Vries M."/>
            <person name="Mann M."/>
            <person name="Vertegaal A.C."/>
        </authorList>
    </citation>
    <scope>SUMOYLATION [LARGE SCALE ANALYSIS] AT LYS-117 AND LYS-170</scope>
    <scope>IDENTIFICATION BY MASS SPECTROMETRY [LARGE SCALE ANALYSIS]</scope>
</reference>
<reference key="28">
    <citation type="journal article" date="2014" name="Proc. Natl. Acad. Sci. U.S.A.">
        <title>Mapping of SUMO sites and analysis of SUMOylation changes induced by external stimuli.</title>
        <authorList>
            <person name="Impens F."/>
            <person name="Radoshevich L."/>
            <person name="Cossart P."/>
            <person name="Ribet D."/>
        </authorList>
    </citation>
    <scope>SUMOYLATION [LARGE SCALE ANALYSIS] AT LYS-117</scope>
    <scope>IDENTIFICATION BY MASS SPECTROMETRY [LARGE SCALE ANALYSIS]</scope>
</reference>
<reference key="29">
    <citation type="journal article" date="2015" name="Mol. Cell. Proteomics">
        <title>System-wide analysis of SUMOylation dynamics in response to replication stress reveals novel small ubiquitin-like modified target proteins and acceptor lysines relevant for genome stability.</title>
        <authorList>
            <person name="Xiao Z."/>
            <person name="Chang J.G."/>
            <person name="Hendriks I.A."/>
            <person name="Sigurdsson J.O."/>
            <person name="Olsen J.V."/>
            <person name="Vertegaal A.C."/>
        </authorList>
    </citation>
    <scope>SUMOYLATION [LARGE SCALE ANALYSIS] AT LYS-117</scope>
    <scope>IDENTIFICATION BY MASS SPECTROMETRY [LARGE SCALE ANALYSIS]</scope>
</reference>
<reference key="30">
    <citation type="journal article" date="2017" name="Nat. Struct. Mol. Biol.">
        <title>Site-specific mapping of the human SUMO proteome reveals co-modification with phosphorylation.</title>
        <authorList>
            <person name="Hendriks I.A."/>
            <person name="Lyon D."/>
            <person name="Young C."/>
            <person name="Jensen L.J."/>
            <person name="Vertegaal A.C."/>
            <person name="Nielsen M.L."/>
        </authorList>
    </citation>
    <scope>SUMOYLATION [LARGE SCALE ANALYSIS] AT LYS-99; LYS-111; LYS-117; LYS-170; LYS-177; LYS-593 AND LYS-659</scope>
    <scope>IDENTIFICATION BY MASS SPECTROMETRY [LARGE SCALE ANALYSIS]</scope>
</reference>
<reference key="31">
    <citation type="journal article" date="2018" name="Nat. Commun.">
        <title>Regulation of Yki/Yap subcellular localization and Hpo signaling by a nuclear kinase PRP4K.</title>
        <authorList>
            <person name="Cho Y.S."/>
            <person name="Zhu J."/>
            <person name="Li S."/>
            <person name="Wang B."/>
            <person name="Han Y."/>
            <person name="Jiang J."/>
        </authorList>
    </citation>
    <scope>FUNCTION</scope>
    <scope>MUTAGENESIS OF LYS-717</scope>
    <scope>CATALYTIC ACTIVITY</scope>
</reference>
<reference key="32">
    <citation type="journal article" date="2022" name="Front. Genet.">
        <title>Tinker, Tailor, Tumour Suppressor: The Many Functions of PRP4K.</title>
        <authorList>
            <person name="Habib E.B."/>
            <person name="Mathavarajah S."/>
            <person name="Dellaire G."/>
        </authorList>
    </citation>
    <scope>REVIEW OF FUNCTIONS</scope>
</reference>
<reference key="33">
    <citation type="journal article" date="2006" name="Science">
        <title>The consensus coding sequences of human breast and colorectal cancers.</title>
        <authorList>
            <person name="Sjoeblom T."/>
            <person name="Jones S."/>
            <person name="Wood L.D."/>
            <person name="Parsons D.W."/>
            <person name="Lin J."/>
            <person name="Barber T.D."/>
            <person name="Mandelker D."/>
            <person name="Leary R.J."/>
            <person name="Ptak J."/>
            <person name="Silliman N."/>
            <person name="Szabo S."/>
            <person name="Buckhaults P."/>
            <person name="Farrell C."/>
            <person name="Meeh P."/>
            <person name="Markowitz S.D."/>
            <person name="Willis J."/>
            <person name="Dawson D."/>
            <person name="Willson J.K.V."/>
            <person name="Gazdar A.F."/>
            <person name="Hartigan J."/>
            <person name="Wu L."/>
            <person name="Liu C."/>
            <person name="Parmigiani G."/>
            <person name="Park B.H."/>
            <person name="Bachman K.E."/>
            <person name="Papadopoulos N."/>
            <person name="Vogelstein B."/>
            <person name="Kinzler K.W."/>
            <person name="Velculescu V.E."/>
        </authorList>
    </citation>
    <scope>VARIANT [LARGE SCALE ANALYSIS] LEU-658</scope>
</reference>
<reference key="34">
    <citation type="journal article" date="2007" name="Nature">
        <title>Patterns of somatic mutation in human cancer genomes.</title>
        <authorList>
            <person name="Greenman C."/>
            <person name="Stephens P."/>
            <person name="Smith R."/>
            <person name="Dalgliesh G.L."/>
            <person name="Hunter C."/>
            <person name="Bignell G."/>
            <person name="Davies H."/>
            <person name="Teague J."/>
            <person name="Butler A."/>
            <person name="Stevens C."/>
            <person name="Edkins S."/>
            <person name="O'Meara S."/>
            <person name="Vastrik I."/>
            <person name="Schmidt E.E."/>
            <person name="Avis T."/>
            <person name="Barthorpe S."/>
            <person name="Bhamra G."/>
            <person name="Buck G."/>
            <person name="Choudhury B."/>
            <person name="Clements J."/>
            <person name="Cole J."/>
            <person name="Dicks E."/>
            <person name="Forbes S."/>
            <person name="Gray K."/>
            <person name="Halliday K."/>
            <person name="Harrison R."/>
            <person name="Hills K."/>
            <person name="Hinton J."/>
            <person name="Jenkinson A."/>
            <person name="Jones D."/>
            <person name="Menzies A."/>
            <person name="Mironenko T."/>
            <person name="Perry J."/>
            <person name="Raine K."/>
            <person name="Richardson D."/>
            <person name="Shepherd R."/>
            <person name="Small A."/>
            <person name="Tofts C."/>
            <person name="Varian J."/>
            <person name="Webb T."/>
            <person name="West S."/>
            <person name="Widaa S."/>
            <person name="Yates A."/>
            <person name="Cahill D.P."/>
            <person name="Louis D.N."/>
            <person name="Goldstraw P."/>
            <person name="Nicholson A.G."/>
            <person name="Brasseur F."/>
            <person name="Looijenga L."/>
            <person name="Weber B.L."/>
            <person name="Chiew Y.-E."/>
            <person name="DeFazio A."/>
            <person name="Greaves M.F."/>
            <person name="Green A.R."/>
            <person name="Campbell P."/>
            <person name="Birney E."/>
            <person name="Easton D.F."/>
            <person name="Chenevix-Trench G."/>
            <person name="Tan M.-H."/>
            <person name="Khoo S.K."/>
            <person name="Teh B.T."/>
            <person name="Yuen S.T."/>
            <person name="Leung S.Y."/>
            <person name="Wooster R."/>
            <person name="Futreal P.A."/>
            <person name="Stratton M.R."/>
        </authorList>
    </citation>
    <scope>VARIANTS [LARGE SCALE ANALYSIS] VAL-584 AND LEU-658</scope>
</reference>
<protein>
    <recommendedName>
        <fullName>Serine/threonine-protein kinase PRP4 homolog</fullName>
        <ecNumber evidence="19 20">2.7.11.1</ecNumber>
    </recommendedName>
    <alternativeName>
        <fullName>PRP4 kinase</fullName>
    </alternativeName>
    <alternativeName>
        <fullName>PRP4 pre-mRNA-processing factor 4 homolog</fullName>
    </alternativeName>
</protein>
<gene>
    <name evidence="21" type="primary">PRP4K</name>
    <name type="synonym">KIAA0536</name>
    <name type="synonym">PRP4</name>
    <name type="synonym">PRP4B</name>
    <name type="synonym">PRP4H</name>
    <name type="synonym">PRPF4K</name>
</gene>
<accession>Q13523</accession>
<accession>A8K5C9</accession>
<accession>Q5D0F6</accession>
<accession>Q5TAY8</accession>
<accession>Q8IVC3</accession>
<accession>Q8TDP2</accession>
<accession>Q96QT7</accession>
<accession>Q9UEE6</accession>
<comment type="function">
    <text evidence="6 7 9 13 14 15 16">Serine/threonine kinase involved in spliceosomal assembly as well as mitosis and signaling regulation (PubMed:10799319, PubMed:12077342, PubMed:17513757, PubMed:17998396). Connects chromatin mediated regulation of transcription and pre-mRNA splicing (PubMed:12077342). During spliceosomal assembly, interacts with and phosphorylates PRPF6 and PRPF31, components of the U4/U6-U5 tri-small nuclear ribonucleoprotein (snRNP), to facilitate the formation of the spliceosome B complex. Plays a role in regulating transcription and the spindle assembly checkpoint (SAC) (PubMed:20118938). Associates with U5 snRNP and NCOR1 deacetylase complexes which may allow a coordination of pre-mRNA splicing with chromatin remodeling events involved in transcriptional regulation (PubMed:12077342). Associates and probably phosphorylates SMARCA4 and NCOR1 (PubMed:12077342). Phosphorylates SRSF1 (PubMed:11418604). Associates with kinetochores during mitosis and is necessary for recruitment and maintenance of the checkpoint proteins such as MAD1L1 and MAD12L1 at the kinetochores (PubMed:17998396). Phosphorylates and regulates the activity of the transcription factors such as ELK1 and KLF13 (PubMed:10799319, PubMed:17513757). Phosphorylates nuclear YAP1 and WWTR1/TAZ which induces nuclear exclusion and regulates Hippo signaling pathway, involved in tissue growth control (PubMed:29695716).</text>
</comment>
<comment type="catalytic activity">
    <reaction evidence="19 20">
        <text>L-seryl-[protein] + ATP = O-phospho-L-seryl-[protein] + ADP + H(+)</text>
        <dbReference type="Rhea" id="RHEA:17989"/>
        <dbReference type="Rhea" id="RHEA-COMP:9863"/>
        <dbReference type="Rhea" id="RHEA-COMP:11604"/>
        <dbReference type="ChEBI" id="CHEBI:15378"/>
        <dbReference type="ChEBI" id="CHEBI:29999"/>
        <dbReference type="ChEBI" id="CHEBI:30616"/>
        <dbReference type="ChEBI" id="CHEBI:83421"/>
        <dbReference type="ChEBI" id="CHEBI:456216"/>
        <dbReference type="EC" id="2.7.11.1"/>
    </reaction>
    <physiologicalReaction direction="left-to-right" evidence="19 20">
        <dbReference type="Rhea" id="RHEA:17990"/>
    </physiologicalReaction>
</comment>
<comment type="catalytic activity">
    <reaction evidence="6 16">
        <text>L-threonyl-[protein] + ATP = O-phospho-L-threonyl-[protein] + ADP + H(+)</text>
        <dbReference type="Rhea" id="RHEA:46608"/>
        <dbReference type="Rhea" id="RHEA-COMP:11060"/>
        <dbReference type="Rhea" id="RHEA-COMP:11605"/>
        <dbReference type="ChEBI" id="CHEBI:15378"/>
        <dbReference type="ChEBI" id="CHEBI:30013"/>
        <dbReference type="ChEBI" id="CHEBI:30616"/>
        <dbReference type="ChEBI" id="CHEBI:61977"/>
        <dbReference type="ChEBI" id="CHEBI:456216"/>
        <dbReference type="EC" id="2.7.11.1"/>
    </reaction>
    <physiologicalReaction direction="left-to-right" evidence="6 16">
        <dbReference type="Rhea" id="RHEA:46609"/>
    </physiologicalReaction>
</comment>
<comment type="subunit">
    <text evidence="7 8 9">Interacts with CLK1 C-terminus (PubMed:11418604). Associates with the U5 snRNP and NCOR1 deacetylase complexes (PubMed:12077342). Identified in the spliceosome C complex (PubMed:11991638).</text>
</comment>
<comment type="interaction">
    <interactant intactId="EBI-395940">
        <id>Q13523</id>
    </interactant>
    <interactant intactId="EBI-743313">
        <id>P49407</id>
        <label>ARRB1</label>
    </interactant>
    <organismsDiffer>false</organismsDiffer>
    <experiments>2</experiments>
</comment>
<comment type="interaction">
    <interactant intactId="EBI-395940">
        <id>Q13523</id>
    </interactant>
    <interactant intactId="EBI-714559">
        <id>P32121</id>
        <label>ARRB2</label>
    </interactant>
    <organismsDiffer>false</organismsDiffer>
    <experiments>3</experiments>
</comment>
<comment type="interaction">
    <interactant intactId="EBI-395940">
        <id>Q13523</id>
    </interactant>
    <interactant intactId="EBI-1255893">
        <id>Q9Y2Y9</id>
        <label>KLF13</label>
    </interactant>
    <organismsDiffer>false</organismsDiffer>
    <experiments>5</experiments>
</comment>
<comment type="interaction">
    <interactant intactId="EBI-395940">
        <id>Q13523</id>
    </interactant>
    <interactant intactId="EBI-710067">
        <id>Q9H1D9</id>
        <label>POLR3F</label>
    </interactant>
    <organismsDiffer>false</organismsDiffer>
    <experiments>2</experiments>
</comment>
<comment type="interaction">
    <interactant intactId="EBI-395940">
        <id>Q13523</id>
    </interactant>
    <interactant intactId="EBI-780156">
        <id>P04590</id>
        <label>gag</label>
    </interactant>
    <organismsDiffer>true</organismsDiffer>
    <experiments>6</experiments>
</comment>
<comment type="subcellular location">
    <subcellularLocation>
        <location evidence="9">Nucleus</location>
    </subcellularLocation>
    <subcellularLocation>
        <location evidence="14">Chromosome</location>
        <location evidence="14">Centromere</location>
        <location evidence="14">Kinetochore</location>
    </subcellularLocation>
    <text evidence="9">Located throughout the nucleus, excluding the nucleolus but enriched in multiple speckles.</text>
</comment>
<comment type="tissue specificity">
    <text>Ubiquitous.</text>
</comment>
<comment type="PTM">
    <text evidence="7 9">Phosphorylated by CLK1 (PubMed:11418604). Autophosphorylated; phosphorylation inhibits interaction with its targets, such as PRPF6 or SMARCA4 (PubMed:12077342).</text>
</comment>
<comment type="similarity">
    <text evidence="18">Belongs to the protein kinase superfamily. CMGC Ser/Thr protein kinase family.</text>
</comment>
<comment type="sequence caution" evidence="18">
    <conflict type="frameshift">
        <sequence resource="EMBL-CDS" id="AAH09844"/>
    </conflict>
</comment>
<comment type="sequence caution" evidence="18">
    <conflict type="erroneous initiation">
        <sequence resource="EMBL-CDS" id="BAA25462"/>
    </conflict>
    <text>Extended N-terminus.</text>
</comment>
<sequence length="1007" mass="116987">MAAAETQSLREQPEMEDANSEKSINEENGEVSEDQSQNKHSRHKKKKHKHRSKHKKHKHSSEEDKDKKHKHKHKHKKHKRKEIIDASDKEGMSPAKRTKLDDLALLEDLEKQRALIKAELDNELMEGKVQSGMGLILQGYESGSEEEGEIHEKARNGNRSSTRSSSTKGKLELVDNKITTKKRSKSRSKERTRHRSDKKKSKGGIEIVKEKTTRSKSKERKKSKSPSKRSKSQDQARKSKSPTLRRRSQEKIGKARSPTDDKVKIEDKSKSKDRKKSPIINESRSRDRGKKSRSPVDLRGKSKDRRSRSKERKSKRSETDKEKKPIKSPSKDASSGKENRSPSRRPGRSPKRRSLSPKPRDKSRRSRSPLLNDRRSKQSKSPSRTLSPGRRAKSRSLERKRREPERRRLSSPRTRPRDDILSRRERSKDASPINRWSPTRRRSRSPIRRRSRSPLRRSRSPRRRSRSPRRRDRGRRSRSRLRRRSRSRGGRRRRSRSKVKEDKFKGSLSEGMKVEQESSSDDNLEDFDVEEEDEEALIEQRRIQRQAIVQKYKYLAEDSNMSVPSEPSSPQSSTRTRSPSPDDILERVAADVKEYERENVDTFEASVKAKHNLMTVEQNNGSSQKKLLAPDMFTESDDMFAAYFDSARLRAAGIGKDFKENPNLRDNWTDAEGYYRVNIGEVLDKRYNVYGYTGQGVFSNVVRARDNARANQEVAVKIIRNNELMQKTGLKELEFLKKLNDADPDDKFHCLRLFRHFYHKQHLCLVFEPLSMNLREVLKKYGKDVGLHIKAVRSYSQQLFLALKLLKRCNILHADIKPDNILVNESKTILKLCDFGSASHVADNDITPYLVSRFYRAPEIIIGKSYDYGIDMWSVGCTLYELYTGKILFPGKTNNHMLKLAMDLKGKMPNKMIRKGVFKDQHFDQNLNFMYIEVDKVTEREKVTVMSTINPTKDLLADLIGCQRLPEDQRKKVHQLKDLLDQILMLDPAKRISINQALQHAFIQEKI</sequence>
<organism>
    <name type="scientific">Homo sapiens</name>
    <name type="common">Human</name>
    <dbReference type="NCBI Taxonomy" id="9606"/>
    <lineage>
        <taxon>Eukaryota</taxon>
        <taxon>Metazoa</taxon>
        <taxon>Chordata</taxon>
        <taxon>Craniata</taxon>
        <taxon>Vertebrata</taxon>
        <taxon>Euteleostomi</taxon>
        <taxon>Mammalia</taxon>
        <taxon>Eutheria</taxon>
        <taxon>Euarchontoglires</taxon>
        <taxon>Primates</taxon>
        <taxon>Haplorrhini</taxon>
        <taxon>Catarrhini</taxon>
        <taxon>Hominidae</taxon>
        <taxon>Homo</taxon>
    </lineage>
</organism>
<dbReference type="EC" id="2.7.11.1" evidence="19 20"/>
<dbReference type="EMBL" id="AY029347">
    <property type="protein sequence ID" value="AAK38155.1"/>
    <property type="molecule type" value="mRNA"/>
</dbReference>
<dbReference type="EMBL" id="AF283465">
    <property type="protein sequence ID" value="AAM19101.1"/>
    <property type="molecule type" value="mRNA"/>
</dbReference>
<dbReference type="EMBL" id="AB011108">
    <property type="protein sequence ID" value="BAA25462.1"/>
    <property type="status" value="ALT_INIT"/>
    <property type="molecule type" value="mRNA"/>
</dbReference>
<dbReference type="EMBL" id="AK291244">
    <property type="protein sequence ID" value="BAF83933.1"/>
    <property type="molecule type" value="mRNA"/>
</dbReference>
<dbReference type="EMBL" id="AL138831">
    <property type="status" value="NOT_ANNOTATED_CDS"/>
    <property type="molecule type" value="Genomic_DNA"/>
</dbReference>
<dbReference type="EMBL" id="AL033383">
    <property type="status" value="NOT_ANNOTATED_CDS"/>
    <property type="molecule type" value="Genomic_DNA"/>
</dbReference>
<dbReference type="EMBL" id="CH471087">
    <property type="protein sequence ID" value="EAW55146.1"/>
    <property type="molecule type" value="Genomic_DNA"/>
</dbReference>
<dbReference type="EMBL" id="BC009844">
    <property type="protein sequence ID" value="AAH09844.1"/>
    <property type="status" value="ALT_FRAME"/>
    <property type="molecule type" value="mRNA"/>
</dbReference>
<dbReference type="EMBL" id="BC034969">
    <property type="protein sequence ID" value="AAH34969.1"/>
    <property type="molecule type" value="mRNA"/>
</dbReference>
<dbReference type="EMBL" id="U48736">
    <property type="protein sequence ID" value="AAB03268.1"/>
    <property type="molecule type" value="mRNA"/>
</dbReference>
<dbReference type="CCDS" id="CCDS4488.1"/>
<dbReference type="RefSeq" id="NP_003904.3">
    <property type="nucleotide sequence ID" value="NM_003913.4"/>
</dbReference>
<dbReference type="RefSeq" id="XP_016866899.1">
    <property type="nucleotide sequence ID" value="XM_017011410.1"/>
</dbReference>
<dbReference type="RefSeq" id="XP_016866900.1">
    <property type="nucleotide sequence ID" value="XM_017011411.1"/>
</dbReference>
<dbReference type="RefSeq" id="XP_016866901.1">
    <property type="nucleotide sequence ID" value="XM_017011412.1"/>
</dbReference>
<dbReference type="RefSeq" id="XP_016866902.1">
    <property type="nucleotide sequence ID" value="XM_017011413.1"/>
</dbReference>
<dbReference type="RefSeq" id="XP_016866903.1">
    <property type="nucleotide sequence ID" value="XM_017011414.1"/>
</dbReference>
<dbReference type="RefSeq" id="XP_016866904.1">
    <property type="nucleotide sequence ID" value="XM_017011415.1"/>
</dbReference>
<dbReference type="RefSeq" id="XP_016866905.1">
    <property type="nucleotide sequence ID" value="XM_017011416.1"/>
</dbReference>
<dbReference type="RefSeq" id="XP_016866906.1">
    <property type="nucleotide sequence ID" value="XM_017011417.1"/>
</dbReference>
<dbReference type="RefSeq" id="XP_016866907.1">
    <property type="nucleotide sequence ID" value="XM_017011418.1"/>
</dbReference>
<dbReference type="RefSeq" id="XP_016866908.1">
    <property type="nucleotide sequence ID" value="XM_017011419.1"/>
</dbReference>
<dbReference type="RefSeq" id="XP_016866909.1">
    <property type="nucleotide sequence ID" value="XM_017011420.1"/>
</dbReference>
<dbReference type="RefSeq" id="XP_016866910.1">
    <property type="nucleotide sequence ID" value="XM_017011421.1"/>
</dbReference>
<dbReference type="RefSeq" id="XP_016866911.1">
    <property type="nucleotide sequence ID" value="XM_017011422.1"/>
</dbReference>
<dbReference type="RefSeq" id="XP_016866912.1">
    <property type="nucleotide sequence ID" value="XM_017011423.1"/>
</dbReference>
<dbReference type="RefSeq" id="XP_016866913.1">
    <property type="nucleotide sequence ID" value="XM_017011424.1"/>
</dbReference>
<dbReference type="RefSeq" id="XP_016866914.1">
    <property type="nucleotide sequence ID" value="XM_017011425.1"/>
</dbReference>
<dbReference type="RefSeq" id="XP_016866915.1">
    <property type="nucleotide sequence ID" value="XM_017011426.1"/>
</dbReference>
<dbReference type="RefSeq" id="XP_016866916.1">
    <property type="nucleotide sequence ID" value="XM_017011427.1"/>
</dbReference>
<dbReference type="RefSeq" id="XP_016866917.1">
    <property type="nucleotide sequence ID" value="XM_017011428.1"/>
</dbReference>
<dbReference type="RefSeq" id="XP_016866918.1">
    <property type="nucleotide sequence ID" value="XM_017011429.1"/>
</dbReference>
<dbReference type="RefSeq" id="XP_016866919.1">
    <property type="nucleotide sequence ID" value="XM_017011430.1"/>
</dbReference>
<dbReference type="RefSeq" id="XP_016866920.1">
    <property type="nucleotide sequence ID" value="XM_017011431.1"/>
</dbReference>
<dbReference type="PDB" id="4IAN">
    <property type="method" value="X-ray"/>
    <property type="resolution" value="2.44 A"/>
    <property type="chains" value="A/B=657-1007"/>
</dbReference>
<dbReference type="PDB" id="4IFC">
    <property type="method" value="X-ray"/>
    <property type="resolution" value="2.13 A"/>
    <property type="chains" value="A/B=657-1007"/>
</dbReference>
<dbReference type="PDB" id="4IIR">
    <property type="method" value="X-ray"/>
    <property type="resolution" value="2.00 A"/>
    <property type="chains" value="A/B=657-1007"/>
</dbReference>
<dbReference type="PDB" id="4IJP">
    <property type="method" value="X-ray"/>
    <property type="resolution" value="2.25 A"/>
    <property type="chains" value="A/B=657-1007"/>
</dbReference>
<dbReference type="PDB" id="6CNH">
    <property type="method" value="X-ray"/>
    <property type="resolution" value="2.00 A"/>
    <property type="chains" value="A=657-1005"/>
</dbReference>
<dbReference type="PDB" id="6PJJ">
    <property type="method" value="X-ray"/>
    <property type="resolution" value="2.40 A"/>
    <property type="chains" value="A/B/C/D=657-1005"/>
</dbReference>
<dbReference type="PDB" id="6PK6">
    <property type="method" value="X-ray"/>
    <property type="resolution" value="2.10 A"/>
    <property type="chains" value="A=657-1005"/>
</dbReference>
<dbReference type="PDB" id="6QX9">
    <property type="method" value="EM"/>
    <property type="resolution" value="3.28 A"/>
    <property type="chains" value="K=1-1007"/>
</dbReference>
<dbReference type="PDB" id="8H6E">
    <property type="method" value="EM"/>
    <property type="resolution" value="3.20 A"/>
    <property type="chains" value="4Y=1-1007"/>
</dbReference>
<dbReference type="PDB" id="8H6J">
    <property type="method" value="EM"/>
    <property type="resolution" value="3.25 A"/>
    <property type="chains" value="4Y=1-1007"/>
</dbReference>
<dbReference type="PDB" id="8QXD">
    <property type="method" value="EM"/>
    <property type="resolution" value="9.60 A"/>
    <property type="chains" value="K=1-1007"/>
</dbReference>
<dbReference type="PDB" id="8R08">
    <property type="method" value="EM"/>
    <property type="resolution" value="6.10 A"/>
    <property type="chains" value="K=1-1007"/>
</dbReference>
<dbReference type="PDB" id="8R0A">
    <property type="method" value="EM"/>
    <property type="resolution" value="5.80 A"/>
    <property type="chains" value="K=1-1007"/>
</dbReference>
<dbReference type="PDB" id="8Y6O">
    <property type="method" value="EM"/>
    <property type="resolution" value="3.38 A"/>
    <property type="chains" value="Q=1-1007"/>
</dbReference>
<dbReference type="PDBsum" id="4IAN"/>
<dbReference type="PDBsum" id="4IFC"/>
<dbReference type="PDBsum" id="4IIR"/>
<dbReference type="PDBsum" id="4IJP"/>
<dbReference type="PDBsum" id="6CNH"/>
<dbReference type="PDBsum" id="6PJJ"/>
<dbReference type="PDBsum" id="6PK6"/>
<dbReference type="PDBsum" id="6QX9"/>
<dbReference type="PDBsum" id="8H6E"/>
<dbReference type="PDBsum" id="8H6J"/>
<dbReference type="PDBsum" id="8QXD"/>
<dbReference type="PDBsum" id="8R08"/>
<dbReference type="PDBsum" id="8R0A"/>
<dbReference type="PDBsum" id="8Y6O"/>
<dbReference type="EMDB" id="EMD-18718"/>
<dbReference type="EMDB" id="EMD-18786"/>
<dbReference type="EMDB" id="EMD-18788"/>
<dbReference type="EMDB" id="EMD-34500"/>
<dbReference type="EMDB" id="EMD-34505"/>
<dbReference type="EMDB" id="EMD-38993"/>
<dbReference type="EMDB" id="EMD-4665"/>
<dbReference type="SMR" id="Q13523"/>
<dbReference type="BioGRID" id="114416">
    <property type="interactions" value="370"/>
</dbReference>
<dbReference type="CORUM" id="Q13523"/>
<dbReference type="FunCoup" id="Q13523">
    <property type="interactions" value="5383"/>
</dbReference>
<dbReference type="IntAct" id="Q13523">
    <property type="interactions" value="225"/>
</dbReference>
<dbReference type="MINT" id="Q13523"/>
<dbReference type="STRING" id="9606.ENSP00000337194"/>
<dbReference type="BindingDB" id="Q13523"/>
<dbReference type="ChEMBL" id="CHEMBL1908382"/>
<dbReference type="DrugBank" id="DB12010">
    <property type="generic name" value="Fostamatinib"/>
</dbReference>
<dbReference type="DrugCentral" id="Q13523"/>
<dbReference type="GlyCosmos" id="Q13523">
    <property type="glycosylation" value="2 sites, 2 glycans"/>
</dbReference>
<dbReference type="GlyGen" id="Q13523">
    <property type="glycosylation" value="4 sites, 2 O-linked glycans (4 sites)"/>
</dbReference>
<dbReference type="iPTMnet" id="Q13523"/>
<dbReference type="MetOSite" id="Q13523"/>
<dbReference type="PhosphoSitePlus" id="Q13523"/>
<dbReference type="SwissPalm" id="Q13523"/>
<dbReference type="BioMuta" id="PRPF4B"/>
<dbReference type="DMDM" id="317373526"/>
<dbReference type="jPOST" id="Q13523"/>
<dbReference type="MassIVE" id="Q13523"/>
<dbReference type="PaxDb" id="9606-ENSP00000337194"/>
<dbReference type="PeptideAtlas" id="Q13523"/>
<dbReference type="ProteomicsDB" id="59518"/>
<dbReference type="Pumba" id="Q13523"/>
<dbReference type="Antibodypedia" id="9532">
    <property type="antibodies" value="163 antibodies from 27 providers"/>
</dbReference>
<dbReference type="DNASU" id="8899"/>
<dbReference type="Ensembl" id="ENST00000337659.11">
    <property type="protein sequence ID" value="ENSP00000337194.6"/>
    <property type="gene ID" value="ENSG00000112739.17"/>
</dbReference>
<dbReference type="Ensembl" id="ENST00000480058.5">
    <property type="protein sequence ID" value="ENSP00000433547.1"/>
    <property type="gene ID" value="ENSG00000112739.17"/>
</dbReference>
<dbReference type="GeneID" id="8899"/>
<dbReference type="KEGG" id="hsa:8899"/>
<dbReference type="MANE-Select" id="ENST00000337659.11">
    <property type="protein sequence ID" value="ENSP00000337194.6"/>
    <property type="RefSeq nucleotide sequence ID" value="NM_003913.5"/>
    <property type="RefSeq protein sequence ID" value="NP_003904.3"/>
</dbReference>
<dbReference type="UCSC" id="uc003mvv.4">
    <property type="organism name" value="human"/>
</dbReference>
<dbReference type="AGR" id="HGNC:17346"/>
<dbReference type="CTD" id="8899"/>
<dbReference type="DisGeNET" id="8899"/>
<dbReference type="GeneCards" id="PRP4K"/>
<dbReference type="HGNC" id="HGNC:17346">
    <property type="gene designation" value="PRP4K"/>
</dbReference>
<dbReference type="HPA" id="ENSG00000112739">
    <property type="expression patterns" value="Low tissue specificity"/>
</dbReference>
<dbReference type="MIM" id="602338">
    <property type="type" value="gene"/>
</dbReference>
<dbReference type="neXtProt" id="NX_Q13523"/>
<dbReference type="OpenTargets" id="ENSG00000112739"/>
<dbReference type="PharmGKB" id="PA38447"/>
<dbReference type="VEuPathDB" id="HostDB:ENSG00000112739"/>
<dbReference type="eggNOG" id="KOG0670">
    <property type="taxonomic scope" value="Eukaryota"/>
</dbReference>
<dbReference type="GeneTree" id="ENSGT00940000155562"/>
<dbReference type="HOGENOM" id="CLU_000288_5_3_1"/>
<dbReference type="InParanoid" id="Q13523"/>
<dbReference type="OMA" id="MNRGDNA"/>
<dbReference type="OrthoDB" id="3967at2759"/>
<dbReference type="PAN-GO" id="Q13523">
    <property type="GO annotations" value="2 GO annotations based on evolutionary models"/>
</dbReference>
<dbReference type="PhylomeDB" id="Q13523"/>
<dbReference type="TreeFam" id="TF315246"/>
<dbReference type="BRENDA" id="2.7.11.1">
    <property type="organism ID" value="2681"/>
</dbReference>
<dbReference type="PathwayCommons" id="Q13523"/>
<dbReference type="Reactome" id="R-HSA-72163">
    <property type="pathway name" value="mRNA Splicing - Major Pathway"/>
</dbReference>
<dbReference type="SignaLink" id="Q13523"/>
<dbReference type="SIGNOR" id="Q13523"/>
<dbReference type="BioGRID-ORCS" id="8899">
    <property type="hits" value="375 hits in 1191 CRISPR screens"/>
</dbReference>
<dbReference type="ChiTaRS" id="PRPF4B">
    <property type="organism name" value="human"/>
</dbReference>
<dbReference type="EvolutionaryTrace" id="Q13523"/>
<dbReference type="GeneWiki" id="PRPF4B"/>
<dbReference type="GenomeRNAi" id="8899"/>
<dbReference type="Pharos" id="Q13523">
    <property type="development level" value="Tchem"/>
</dbReference>
<dbReference type="PRO" id="PR:Q13523"/>
<dbReference type="Proteomes" id="UP000005640">
    <property type="component" value="Chromosome 6"/>
</dbReference>
<dbReference type="RNAct" id="Q13523">
    <property type="molecule type" value="protein"/>
</dbReference>
<dbReference type="Bgee" id="ENSG00000112739">
    <property type="expression patterns" value="Expressed in endothelial cell and 206 other cell types or tissues"/>
</dbReference>
<dbReference type="ExpressionAtlas" id="Q13523">
    <property type="expression patterns" value="baseline and differential"/>
</dbReference>
<dbReference type="GO" id="GO:0071013">
    <property type="term" value="C:catalytic step 2 spliceosome"/>
    <property type="evidence" value="ECO:0000314"/>
    <property type="project" value="UniProtKB"/>
</dbReference>
<dbReference type="GO" id="GO:0000776">
    <property type="term" value="C:kinetochore"/>
    <property type="evidence" value="ECO:0000314"/>
    <property type="project" value="UniProtKB"/>
</dbReference>
<dbReference type="GO" id="GO:0016607">
    <property type="term" value="C:nuclear speck"/>
    <property type="evidence" value="ECO:0000314"/>
    <property type="project" value="UniProtKB"/>
</dbReference>
<dbReference type="GO" id="GO:0005654">
    <property type="term" value="C:nucleoplasm"/>
    <property type="evidence" value="ECO:0000304"/>
    <property type="project" value="Reactome"/>
</dbReference>
<dbReference type="GO" id="GO:0005634">
    <property type="term" value="C:nucleus"/>
    <property type="evidence" value="ECO:0000314"/>
    <property type="project" value="UniProtKB"/>
</dbReference>
<dbReference type="GO" id="GO:0005524">
    <property type="term" value="F:ATP binding"/>
    <property type="evidence" value="ECO:0007669"/>
    <property type="project" value="UniProtKB-KW"/>
</dbReference>
<dbReference type="GO" id="GO:0106310">
    <property type="term" value="F:protein serine kinase activity"/>
    <property type="evidence" value="ECO:0007669"/>
    <property type="project" value="RHEA"/>
</dbReference>
<dbReference type="GO" id="GO:0004674">
    <property type="term" value="F:protein serine/threonine kinase activity"/>
    <property type="evidence" value="ECO:0000314"/>
    <property type="project" value="UniProtKB"/>
</dbReference>
<dbReference type="GO" id="GO:0003723">
    <property type="term" value="F:RNA binding"/>
    <property type="evidence" value="ECO:0007005"/>
    <property type="project" value="UniProtKB"/>
</dbReference>
<dbReference type="GO" id="GO:0045292">
    <property type="term" value="P:mRNA cis splicing, via spliceosome"/>
    <property type="evidence" value="ECO:0007669"/>
    <property type="project" value="InterPro"/>
</dbReference>
<dbReference type="GO" id="GO:0000398">
    <property type="term" value="P:mRNA splicing, via spliceosome"/>
    <property type="evidence" value="ECO:0000305"/>
    <property type="project" value="UniProtKB"/>
</dbReference>
<dbReference type="GO" id="GO:0035332">
    <property type="term" value="P:positive regulation of hippo signaling"/>
    <property type="evidence" value="ECO:0000314"/>
    <property type="project" value="UniProt"/>
</dbReference>
<dbReference type="GO" id="GO:0046827">
    <property type="term" value="P:positive regulation of protein export from nucleus"/>
    <property type="evidence" value="ECO:0000314"/>
    <property type="project" value="UniProt"/>
</dbReference>
<dbReference type="GO" id="GO:0090266">
    <property type="term" value="P:regulation of mitotic cell cycle spindle assembly checkpoint"/>
    <property type="evidence" value="ECO:0000314"/>
    <property type="project" value="UniProtKB"/>
</dbReference>
<dbReference type="GO" id="GO:0000387">
    <property type="term" value="P:spliceosomal snRNP assembly"/>
    <property type="evidence" value="ECO:0000314"/>
    <property type="project" value="UniProtKB"/>
</dbReference>
<dbReference type="GO" id="GO:0000244">
    <property type="term" value="P:spliceosomal tri-snRNP complex assembly"/>
    <property type="evidence" value="ECO:0000314"/>
    <property type="project" value="UniProtKB"/>
</dbReference>
<dbReference type="CDD" id="cd14135">
    <property type="entry name" value="STKc_PRP4"/>
    <property type="match status" value="1"/>
</dbReference>
<dbReference type="FunFam" id="1.10.510.10:FF:000078">
    <property type="entry name" value="Serine/threonine-protein kinase PRP4 homolog"/>
    <property type="match status" value="1"/>
</dbReference>
<dbReference type="FunFam" id="3.30.200.20:FF:000123">
    <property type="entry name" value="serine/threonine-protein kinase PRP4 homolog"/>
    <property type="match status" value="1"/>
</dbReference>
<dbReference type="Gene3D" id="3.30.200.20">
    <property type="entry name" value="Phosphorylase Kinase, domain 1"/>
    <property type="match status" value="1"/>
</dbReference>
<dbReference type="Gene3D" id="1.10.510.10">
    <property type="entry name" value="Transferase(Phosphotransferase) domain 1"/>
    <property type="match status" value="1"/>
</dbReference>
<dbReference type="InterPro" id="IPR011009">
    <property type="entry name" value="Kinase-like_dom_sf"/>
</dbReference>
<dbReference type="InterPro" id="IPR000719">
    <property type="entry name" value="Prot_kinase_dom"/>
</dbReference>
<dbReference type="InterPro" id="IPR008271">
    <property type="entry name" value="Ser/Thr_kinase_AS"/>
</dbReference>
<dbReference type="InterPro" id="IPR050494">
    <property type="entry name" value="Ser_Thr_dual-spec_kinase"/>
</dbReference>
<dbReference type="InterPro" id="IPR044092">
    <property type="entry name" value="STKc_PRP4"/>
</dbReference>
<dbReference type="PANTHER" id="PTHR24058">
    <property type="entry name" value="DUAL SPECIFICITY PROTEIN KINASE"/>
    <property type="match status" value="1"/>
</dbReference>
<dbReference type="PANTHER" id="PTHR24058:SF103">
    <property type="entry name" value="SERINE_THREONINE-PROTEIN KINASE PRP4 HOMOLOG"/>
    <property type="match status" value="1"/>
</dbReference>
<dbReference type="Pfam" id="PF00069">
    <property type="entry name" value="Pkinase"/>
    <property type="match status" value="1"/>
</dbReference>
<dbReference type="SMART" id="SM00220">
    <property type="entry name" value="S_TKc"/>
    <property type="match status" value="1"/>
</dbReference>
<dbReference type="SUPFAM" id="SSF56112">
    <property type="entry name" value="Protein kinase-like (PK-like)"/>
    <property type="match status" value="1"/>
</dbReference>
<dbReference type="PROSITE" id="PS50011">
    <property type="entry name" value="PROTEIN_KINASE_DOM"/>
    <property type="match status" value="1"/>
</dbReference>
<dbReference type="PROSITE" id="PS00108">
    <property type="entry name" value="PROTEIN_KINASE_ST"/>
    <property type="match status" value="1"/>
</dbReference>